<proteinExistence type="inferred from homology"/>
<keyword id="KW-0963">Cytoplasm</keyword>
<keyword id="KW-0671">Queuosine biosynthesis</keyword>
<keyword id="KW-0949">S-adenosyl-L-methionine</keyword>
<keyword id="KW-0808">Transferase</keyword>
<evidence type="ECO:0000255" key="1">
    <source>
        <dbReference type="HAMAP-Rule" id="MF_00113"/>
    </source>
</evidence>
<gene>
    <name evidence="1" type="primary">queA</name>
    <name type="ordered locus">CKR_2781</name>
</gene>
<name>QUEA_CLOK1</name>
<reference key="1">
    <citation type="submission" date="2005-09" db="EMBL/GenBank/DDBJ databases">
        <title>Complete genome sequence of Clostridium kluyveri and comparative genomics of Clostridia species.</title>
        <authorList>
            <person name="Inui M."/>
            <person name="Nonaka H."/>
            <person name="Shinoda Y."/>
            <person name="Ikenaga Y."/>
            <person name="Abe M."/>
            <person name="Naito K."/>
            <person name="Vertes A.A."/>
            <person name="Yukawa H."/>
        </authorList>
    </citation>
    <scope>NUCLEOTIDE SEQUENCE [LARGE SCALE GENOMIC DNA]</scope>
    <source>
        <strain>NBRC 12016</strain>
    </source>
</reference>
<feature type="chain" id="PRO_1000119149" description="S-adenosylmethionine:tRNA ribosyltransferase-isomerase">
    <location>
        <begin position="1"/>
        <end position="341"/>
    </location>
</feature>
<dbReference type="EC" id="2.4.99.17" evidence="1"/>
<dbReference type="EMBL" id="AP009049">
    <property type="protein sequence ID" value="BAH07832.1"/>
    <property type="molecule type" value="Genomic_DNA"/>
</dbReference>
<dbReference type="RefSeq" id="WP_012103486.1">
    <property type="nucleotide sequence ID" value="NC_011837.1"/>
</dbReference>
<dbReference type="SMR" id="B9E5Q7"/>
<dbReference type="KEGG" id="ckr:CKR_2781"/>
<dbReference type="HOGENOM" id="CLU_039110_1_0_9"/>
<dbReference type="UniPathway" id="UPA00392"/>
<dbReference type="Proteomes" id="UP000007969">
    <property type="component" value="Chromosome"/>
</dbReference>
<dbReference type="GO" id="GO:0005737">
    <property type="term" value="C:cytoplasm"/>
    <property type="evidence" value="ECO:0007669"/>
    <property type="project" value="UniProtKB-SubCell"/>
</dbReference>
<dbReference type="GO" id="GO:0051075">
    <property type="term" value="F:S-adenosylmethionine:tRNA ribosyltransferase-isomerase activity"/>
    <property type="evidence" value="ECO:0007669"/>
    <property type="project" value="UniProtKB-EC"/>
</dbReference>
<dbReference type="GO" id="GO:0008616">
    <property type="term" value="P:queuosine biosynthetic process"/>
    <property type="evidence" value="ECO:0007669"/>
    <property type="project" value="UniProtKB-UniRule"/>
</dbReference>
<dbReference type="GO" id="GO:0002099">
    <property type="term" value="P:tRNA wobble guanine modification"/>
    <property type="evidence" value="ECO:0007669"/>
    <property type="project" value="TreeGrafter"/>
</dbReference>
<dbReference type="FunFam" id="2.40.10.240:FF:000002">
    <property type="entry name" value="S-adenosylmethionine:tRNA ribosyltransferase-isomerase"/>
    <property type="match status" value="1"/>
</dbReference>
<dbReference type="FunFam" id="3.40.1780.10:FF:000001">
    <property type="entry name" value="S-adenosylmethionine:tRNA ribosyltransferase-isomerase"/>
    <property type="match status" value="1"/>
</dbReference>
<dbReference type="Gene3D" id="2.40.10.240">
    <property type="entry name" value="QueA-like"/>
    <property type="match status" value="1"/>
</dbReference>
<dbReference type="Gene3D" id="3.40.1780.10">
    <property type="entry name" value="QueA-like"/>
    <property type="match status" value="1"/>
</dbReference>
<dbReference type="HAMAP" id="MF_00113">
    <property type="entry name" value="QueA"/>
    <property type="match status" value="1"/>
</dbReference>
<dbReference type="InterPro" id="IPR003699">
    <property type="entry name" value="QueA"/>
</dbReference>
<dbReference type="InterPro" id="IPR042118">
    <property type="entry name" value="QueA_dom1"/>
</dbReference>
<dbReference type="InterPro" id="IPR042119">
    <property type="entry name" value="QueA_dom2"/>
</dbReference>
<dbReference type="InterPro" id="IPR036100">
    <property type="entry name" value="QueA_sf"/>
</dbReference>
<dbReference type="NCBIfam" id="NF001140">
    <property type="entry name" value="PRK00147.1"/>
    <property type="match status" value="1"/>
</dbReference>
<dbReference type="NCBIfam" id="TIGR00113">
    <property type="entry name" value="queA"/>
    <property type="match status" value="1"/>
</dbReference>
<dbReference type="PANTHER" id="PTHR30307">
    <property type="entry name" value="S-ADENOSYLMETHIONINE:TRNA RIBOSYLTRANSFERASE-ISOMERASE"/>
    <property type="match status" value="1"/>
</dbReference>
<dbReference type="PANTHER" id="PTHR30307:SF0">
    <property type="entry name" value="S-ADENOSYLMETHIONINE:TRNA RIBOSYLTRANSFERASE-ISOMERASE"/>
    <property type="match status" value="1"/>
</dbReference>
<dbReference type="Pfam" id="PF02547">
    <property type="entry name" value="Queuosine_synth"/>
    <property type="match status" value="1"/>
</dbReference>
<dbReference type="SUPFAM" id="SSF111337">
    <property type="entry name" value="QueA-like"/>
    <property type="match status" value="1"/>
</dbReference>
<organism>
    <name type="scientific">Clostridium kluyveri (strain NBRC 12016)</name>
    <dbReference type="NCBI Taxonomy" id="583346"/>
    <lineage>
        <taxon>Bacteria</taxon>
        <taxon>Bacillati</taxon>
        <taxon>Bacillota</taxon>
        <taxon>Clostridia</taxon>
        <taxon>Eubacteriales</taxon>
        <taxon>Clostridiaceae</taxon>
        <taxon>Clostridium</taxon>
    </lineage>
</organism>
<comment type="function">
    <text evidence="1">Transfers and isomerizes the ribose moiety from AdoMet to the 7-aminomethyl group of 7-deazaguanine (preQ1-tRNA) to give epoxyqueuosine (oQ-tRNA).</text>
</comment>
<comment type="catalytic activity">
    <reaction evidence="1">
        <text>7-aminomethyl-7-carbaguanosine(34) in tRNA + S-adenosyl-L-methionine = epoxyqueuosine(34) in tRNA + adenine + L-methionine + 2 H(+)</text>
        <dbReference type="Rhea" id="RHEA:32155"/>
        <dbReference type="Rhea" id="RHEA-COMP:10342"/>
        <dbReference type="Rhea" id="RHEA-COMP:18582"/>
        <dbReference type="ChEBI" id="CHEBI:15378"/>
        <dbReference type="ChEBI" id="CHEBI:16708"/>
        <dbReference type="ChEBI" id="CHEBI:57844"/>
        <dbReference type="ChEBI" id="CHEBI:59789"/>
        <dbReference type="ChEBI" id="CHEBI:82833"/>
        <dbReference type="ChEBI" id="CHEBI:194443"/>
        <dbReference type="EC" id="2.4.99.17"/>
    </reaction>
</comment>
<comment type="pathway">
    <text evidence="1">tRNA modification; tRNA-queuosine biosynthesis.</text>
</comment>
<comment type="subunit">
    <text evidence="1">Monomer.</text>
</comment>
<comment type="subcellular location">
    <subcellularLocation>
        <location evidence="1">Cytoplasm</location>
    </subcellularLocation>
</comment>
<comment type="similarity">
    <text evidence="1">Belongs to the QueA family.</text>
</comment>
<accession>B9E5Q7</accession>
<protein>
    <recommendedName>
        <fullName evidence="1">S-adenosylmethionine:tRNA ribosyltransferase-isomerase</fullName>
        <ecNumber evidence="1">2.4.99.17</ecNumber>
    </recommendedName>
    <alternativeName>
        <fullName evidence="1">Queuosine biosynthesis protein QueA</fullName>
    </alternativeName>
</protein>
<sequence length="341" mass="39003">MEVTDFDFYLPEELIAQKPLEQRDEGRLMVLDKKTGKVCHKIFKDIVYYLNPGDCVVLNDTRVLPARLIGVREDTMGKIEFLLLKRRDNFTWETLVKPGRRAKVGNRFNFGSGQLKAEVVSINEDGNRIVRFEYNGVFEEILDKLGQIPLPPYIKEKLENKELYQTVYSKEEGSAAAPTAGLHFTEELLRELREKGVNLAFLTLHVGLGTFRPVKVENIEDHAMHSEFYSMSKETADMINAAKESGHSVISVGTTSCRTLETIGDENGRVKEQSGWTDIFIYPGYKYKVVDKLITNFHLPKSTLIMLVSAFYGRENTLHAYNVAVKEKYRFFSFGDAMFIK</sequence>